<name>TPIS_PLAF7</name>
<accession>Q7KQM0</accession>
<accession>A0A144A4G4</accession>
<comment type="function">
    <text evidence="1">Catalyzes the interconversion of glyceraldehyde 3-phosphate and dihydroxyacetone phosphate in the glycolytic and gluconeogenic pathways.</text>
</comment>
<comment type="catalytic activity">
    <reaction evidence="1">
        <text>D-glyceraldehyde 3-phosphate = dihydroxyacetone phosphate</text>
        <dbReference type="Rhea" id="RHEA:18585"/>
        <dbReference type="ChEBI" id="CHEBI:57642"/>
        <dbReference type="ChEBI" id="CHEBI:59776"/>
        <dbReference type="EC" id="5.3.1.1"/>
    </reaction>
    <physiologicalReaction direction="left-to-right" evidence="1">
        <dbReference type="Rhea" id="RHEA:18586"/>
    </physiologicalReaction>
</comment>
<comment type="pathway">
    <text evidence="1">Carbohydrate biosynthesis; gluconeogenesis.</text>
</comment>
<comment type="pathway">
    <text evidence="1">Carbohydrate degradation; glycolysis; D-glyceraldehyde 3-phosphate from glycerone phosphate: step 1/1.</text>
</comment>
<comment type="subunit">
    <text evidence="1">Homodimer.</text>
</comment>
<comment type="similarity">
    <text evidence="3">Belongs to the triosephosphate isomerase family.</text>
</comment>
<keyword id="KW-0312">Gluconeogenesis</keyword>
<keyword id="KW-0324">Glycolysis</keyword>
<keyword id="KW-0413">Isomerase</keyword>
<keyword id="KW-1185">Reference proteome</keyword>
<evidence type="ECO:0000250" key="1">
    <source>
        <dbReference type="UniProtKB" id="Q07412"/>
    </source>
</evidence>
<evidence type="ECO:0000255" key="2">
    <source>
        <dbReference type="PROSITE-ProRule" id="PRU10127"/>
    </source>
</evidence>
<evidence type="ECO:0000305" key="3"/>
<reference key="1">
    <citation type="journal article" date="2002" name="Nature">
        <title>Genome sequence of the human malaria parasite Plasmodium falciparum.</title>
        <authorList>
            <person name="Gardner M.J."/>
            <person name="Hall N."/>
            <person name="Fung E."/>
            <person name="White O."/>
            <person name="Berriman M."/>
            <person name="Hyman R.W."/>
            <person name="Carlton J.M."/>
            <person name="Pain A."/>
            <person name="Nelson K.E."/>
            <person name="Bowman S."/>
            <person name="Paulsen I.T."/>
            <person name="James K.D."/>
            <person name="Eisen J.A."/>
            <person name="Rutherford K.M."/>
            <person name="Salzberg S.L."/>
            <person name="Craig A."/>
            <person name="Kyes S."/>
            <person name="Chan M.-S."/>
            <person name="Nene V."/>
            <person name="Shallom S.J."/>
            <person name="Suh B."/>
            <person name="Peterson J."/>
            <person name="Angiuoli S."/>
            <person name="Pertea M."/>
            <person name="Allen J."/>
            <person name="Selengut J."/>
            <person name="Haft D."/>
            <person name="Mather M.W."/>
            <person name="Vaidya A.B."/>
            <person name="Martin D.M.A."/>
            <person name="Fairlamb A.H."/>
            <person name="Fraunholz M.J."/>
            <person name="Roos D.S."/>
            <person name="Ralph S.A."/>
            <person name="McFadden G.I."/>
            <person name="Cummings L.M."/>
            <person name="Subramanian G.M."/>
            <person name="Mungall C."/>
            <person name="Venter J.C."/>
            <person name="Carucci D.J."/>
            <person name="Hoffman S.L."/>
            <person name="Newbold C."/>
            <person name="Davis R.W."/>
            <person name="Fraser C.M."/>
            <person name="Barrell B.G."/>
        </authorList>
    </citation>
    <scope>NUCLEOTIDE SEQUENCE [LARGE SCALE GENOMIC DNA]</scope>
    <source>
        <strain>3D7</strain>
    </source>
</reference>
<dbReference type="EC" id="5.3.1.1" evidence="1"/>
<dbReference type="EMBL" id="LN999946">
    <property type="protein sequence ID" value="CZU00095.1"/>
    <property type="molecule type" value="Genomic_DNA"/>
</dbReference>
<dbReference type="RefSeq" id="XP_001348552.1">
    <property type="nucleotide sequence ID" value="XM_001348516.2"/>
</dbReference>
<dbReference type="SMR" id="Q7KQM0"/>
<dbReference type="FunCoup" id="Q7KQM0">
    <property type="interactions" value="235"/>
</dbReference>
<dbReference type="STRING" id="36329.Q7KQM0"/>
<dbReference type="SwissPalm" id="Q7KQM0"/>
<dbReference type="PaxDb" id="5833-PF14_0378"/>
<dbReference type="EnsemblProtists" id="CZU00095">
    <property type="protein sequence ID" value="CZU00095"/>
    <property type="gene ID" value="PF3D7_1439900"/>
</dbReference>
<dbReference type="GeneID" id="811960"/>
<dbReference type="KEGG" id="pfa:PF3D7_1439900"/>
<dbReference type="VEuPathDB" id="PlasmoDB:PF3D7_1439900"/>
<dbReference type="HOGENOM" id="CLU_024251_2_3_1"/>
<dbReference type="InParanoid" id="Q7KQM0"/>
<dbReference type="OMA" id="NWKMHMT"/>
<dbReference type="OrthoDB" id="6715177at2759"/>
<dbReference type="PhylomeDB" id="Q7KQM0"/>
<dbReference type="Reactome" id="R-PFA-70171">
    <property type="pathway name" value="Glycolysis"/>
</dbReference>
<dbReference type="Reactome" id="R-PFA-70263">
    <property type="pathway name" value="Gluconeogenesis"/>
</dbReference>
<dbReference type="UniPathway" id="UPA00109">
    <property type="reaction ID" value="UER00189"/>
</dbReference>
<dbReference type="UniPathway" id="UPA00138"/>
<dbReference type="Proteomes" id="UP000001450">
    <property type="component" value="Chromosome 14"/>
</dbReference>
<dbReference type="GO" id="GO:0005829">
    <property type="term" value="C:cytosol"/>
    <property type="evidence" value="ECO:0000318"/>
    <property type="project" value="GO_Central"/>
</dbReference>
<dbReference type="GO" id="GO:0004807">
    <property type="term" value="F:triose-phosphate isomerase activity"/>
    <property type="evidence" value="ECO:0000314"/>
    <property type="project" value="GeneDB"/>
</dbReference>
<dbReference type="GO" id="GO:0006633">
    <property type="term" value="P:fatty acid biosynthetic process"/>
    <property type="evidence" value="ECO:0000250"/>
    <property type="project" value="GeneDB"/>
</dbReference>
<dbReference type="GO" id="GO:0006094">
    <property type="term" value="P:gluconeogenesis"/>
    <property type="evidence" value="ECO:0000250"/>
    <property type="project" value="GeneDB"/>
</dbReference>
<dbReference type="GO" id="GO:0046166">
    <property type="term" value="P:glyceraldehyde-3-phosphate biosynthetic process"/>
    <property type="evidence" value="ECO:0000318"/>
    <property type="project" value="GO_Central"/>
</dbReference>
<dbReference type="GO" id="GO:0019563">
    <property type="term" value="P:glycerol catabolic process"/>
    <property type="evidence" value="ECO:0000318"/>
    <property type="project" value="GO_Central"/>
</dbReference>
<dbReference type="GO" id="GO:0006096">
    <property type="term" value="P:glycolytic process"/>
    <property type="evidence" value="ECO:0000250"/>
    <property type="project" value="GeneDB"/>
</dbReference>
<dbReference type="GO" id="GO:0006098">
    <property type="term" value="P:pentose-phosphate shunt"/>
    <property type="evidence" value="ECO:0000250"/>
    <property type="project" value="GeneDB"/>
</dbReference>
<dbReference type="CDD" id="cd00311">
    <property type="entry name" value="TIM"/>
    <property type="match status" value="1"/>
</dbReference>
<dbReference type="FunFam" id="3.20.20.70:FF:000016">
    <property type="entry name" value="Triosephosphate isomerase"/>
    <property type="match status" value="1"/>
</dbReference>
<dbReference type="Gene3D" id="3.20.20.70">
    <property type="entry name" value="Aldolase class I"/>
    <property type="match status" value="1"/>
</dbReference>
<dbReference type="HAMAP" id="MF_00147_B">
    <property type="entry name" value="TIM_B"/>
    <property type="match status" value="1"/>
</dbReference>
<dbReference type="InterPro" id="IPR013785">
    <property type="entry name" value="Aldolase_TIM"/>
</dbReference>
<dbReference type="InterPro" id="IPR035990">
    <property type="entry name" value="TIM_sf"/>
</dbReference>
<dbReference type="InterPro" id="IPR022896">
    <property type="entry name" value="TrioseP_Isoase_bac/euk"/>
</dbReference>
<dbReference type="InterPro" id="IPR000652">
    <property type="entry name" value="Triosephosphate_isomerase"/>
</dbReference>
<dbReference type="InterPro" id="IPR020861">
    <property type="entry name" value="Triosephosphate_isomerase_AS"/>
</dbReference>
<dbReference type="NCBIfam" id="TIGR00419">
    <property type="entry name" value="tim"/>
    <property type="match status" value="1"/>
</dbReference>
<dbReference type="PANTHER" id="PTHR21139">
    <property type="entry name" value="TRIOSEPHOSPHATE ISOMERASE"/>
    <property type="match status" value="1"/>
</dbReference>
<dbReference type="PANTHER" id="PTHR21139:SF2">
    <property type="entry name" value="TRIOSEPHOSPHATE ISOMERASE"/>
    <property type="match status" value="1"/>
</dbReference>
<dbReference type="Pfam" id="PF00121">
    <property type="entry name" value="TIM"/>
    <property type="match status" value="1"/>
</dbReference>
<dbReference type="SUPFAM" id="SSF51351">
    <property type="entry name" value="Triosephosphate isomerase (TIM)"/>
    <property type="match status" value="1"/>
</dbReference>
<dbReference type="PROSITE" id="PS00171">
    <property type="entry name" value="TIM_1"/>
    <property type="match status" value="1"/>
</dbReference>
<dbReference type="PROSITE" id="PS51440">
    <property type="entry name" value="TIM_2"/>
    <property type="match status" value="1"/>
</dbReference>
<gene>
    <name evidence="1" type="primary">TPI</name>
    <name type="ORF">PF14_0378</name>
    <name type="ORF">PF3D7_1439900</name>
</gene>
<protein>
    <recommendedName>
        <fullName evidence="1">Triosephosphate isomerase</fullName>
        <shortName evidence="1">PfTIM</shortName>
        <ecNumber evidence="1">5.3.1.1</ecNumber>
    </recommendedName>
    <alternativeName>
        <fullName>Triose-phosphate isomerase</fullName>
    </alternativeName>
</protein>
<feature type="chain" id="PRO_0000233387" description="Triosephosphate isomerase">
    <location>
        <begin position="1"/>
        <end position="248"/>
    </location>
</feature>
<feature type="active site" description="Electrophile" evidence="2">
    <location>
        <position position="95"/>
    </location>
</feature>
<feature type="active site" description="Proton acceptor" evidence="2">
    <location>
        <position position="165"/>
    </location>
</feature>
<feature type="binding site" evidence="1">
    <location>
        <position position="10"/>
    </location>
    <ligand>
        <name>D-glyceraldehyde 3-phosphate</name>
        <dbReference type="ChEBI" id="CHEBI:59776"/>
    </ligand>
</feature>
<feature type="binding site" evidence="1">
    <location>
        <position position="12"/>
    </location>
    <ligand>
        <name>D-glyceraldehyde 3-phosphate</name>
        <dbReference type="ChEBI" id="CHEBI:59776"/>
    </ligand>
</feature>
<feature type="binding site" evidence="1">
    <location>
        <position position="171"/>
    </location>
    <ligand>
        <name>D-glyceraldehyde 3-phosphate</name>
        <dbReference type="ChEBI" id="CHEBI:59776"/>
    </ligand>
</feature>
<feature type="binding site" evidence="1">
    <location>
        <position position="230"/>
    </location>
    <ligand>
        <name>D-glyceraldehyde 3-phosphate</name>
        <dbReference type="ChEBI" id="CHEBI:59776"/>
    </ligand>
</feature>
<feature type="binding site" evidence="1">
    <location>
        <begin position="232"/>
        <end position="233"/>
    </location>
    <ligand>
        <name>D-glyceraldehyde 3-phosphate</name>
        <dbReference type="ChEBI" id="CHEBI:59776"/>
    </ligand>
</feature>
<sequence length="248" mass="27935">MARKYFVAANWKCNGTLESIKSLTNSFNNLDFDPSKLDVVVFPVSVHYDHTRKLLQSKFSTGIQNVSKFGNGSYTGEVSAEIAKDLNIEYVIIGHFERRKYFHETDEDVREKLQASLKNNLKAVVCFGESLEQREQNKTIEVITKQVKAFVDLIDNFDNVILAYEPLWAIGTGKTATPEQAQLVHKEIRKIVKDTCGEKQANQIRILYGGSVNTENCSSLIQQEDIDGFLVGNASLKESFVDIIKSAM</sequence>
<proteinExistence type="inferred from homology"/>
<organism>
    <name type="scientific">Plasmodium falciparum (isolate 3D7)</name>
    <dbReference type="NCBI Taxonomy" id="36329"/>
    <lineage>
        <taxon>Eukaryota</taxon>
        <taxon>Sar</taxon>
        <taxon>Alveolata</taxon>
        <taxon>Apicomplexa</taxon>
        <taxon>Aconoidasida</taxon>
        <taxon>Haemosporida</taxon>
        <taxon>Plasmodiidae</taxon>
        <taxon>Plasmodium</taxon>
        <taxon>Plasmodium (Laverania)</taxon>
    </lineage>
</organism>